<reference key="1">
    <citation type="submission" date="2006-12" db="EMBL/GenBank/DDBJ databases">
        <title>Complete sequence of Shewanella sp. W3-18-1.</title>
        <authorList>
            <consortium name="US DOE Joint Genome Institute"/>
            <person name="Copeland A."/>
            <person name="Lucas S."/>
            <person name="Lapidus A."/>
            <person name="Barry K."/>
            <person name="Detter J.C."/>
            <person name="Glavina del Rio T."/>
            <person name="Hammon N."/>
            <person name="Israni S."/>
            <person name="Dalin E."/>
            <person name="Tice H."/>
            <person name="Pitluck S."/>
            <person name="Chain P."/>
            <person name="Malfatti S."/>
            <person name="Shin M."/>
            <person name="Vergez L."/>
            <person name="Schmutz J."/>
            <person name="Larimer F."/>
            <person name="Land M."/>
            <person name="Hauser L."/>
            <person name="Kyrpides N."/>
            <person name="Lykidis A."/>
            <person name="Tiedje J."/>
            <person name="Richardson P."/>
        </authorList>
    </citation>
    <scope>NUCLEOTIDE SEQUENCE [LARGE SCALE GENOMIC DNA]</scope>
    <source>
        <strain>W3-18-1</strain>
    </source>
</reference>
<accession>A1RPD7</accession>
<organism>
    <name type="scientific">Shewanella sp. (strain W3-18-1)</name>
    <dbReference type="NCBI Taxonomy" id="351745"/>
    <lineage>
        <taxon>Bacteria</taxon>
        <taxon>Pseudomonadati</taxon>
        <taxon>Pseudomonadota</taxon>
        <taxon>Gammaproteobacteria</taxon>
        <taxon>Alteromonadales</taxon>
        <taxon>Shewanellaceae</taxon>
        <taxon>Shewanella</taxon>
    </lineage>
</organism>
<sequence length="310" mass="33400">MSENRIRIATRKSPLAMWQAEFVKAELERIHPGIVVELLPMSTKGDVILDTPLAKVGGKGLFVKELEVAILEDQADIAVHSMKDVPVDFPEGLGLEVICEREDPRDAFVSNIYKTISELPLGATVGTSSLRRQCQLRASRPDLIIKDLRGNVGTRLAKLDNGEYDAIILAAAGLIRLKLSGRIASFISAEQSLPANGQGAVGIECRTNDERVKALLAPLEHLETRYRVIAERAMNTRLEGGCQVPIGAFAEINGDEMTLRGLVGNPDGSEIIEGIITGPKTEATQLGVALAEELLSKGAKSILDAVYAKA</sequence>
<comment type="function">
    <text evidence="1">Tetrapolymerization of the monopyrrole PBG into the hydroxymethylbilane pre-uroporphyrinogen in several discrete steps.</text>
</comment>
<comment type="catalytic activity">
    <reaction evidence="1">
        <text>4 porphobilinogen + H2O = hydroxymethylbilane + 4 NH4(+)</text>
        <dbReference type="Rhea" id="RHEA:13185"/>
        <dbReference type="ChEBI" id="CHEBI:15377"/>
        <dbReference type="ChEBI" id="CHEBI:28938"/>
        <dbReference type="ChEBI" id="CHEBI:57845"/>
        <dbReference type="ChEBI" id="CHEBI:58126"/>
        <dbReference type="EC" id="2.5.1.61"/>
    </reaction>
</comment>
<comment type="cofactor">
    <cofactor evidence="1">
        <name>dipyrromethane</name>
        <dbReference type="ChEBI" id="CHEBI:60342"/>
    </cofactor>
    <text evidence="1">Binds 1 dipyrromethane group covalently.</text>
</comment>
<comment type="pathway">
    <text evidence="1">Porphyrin-containing compound metabolism; protoporphyrin-IX biosynthesis; coproporphyrinogen-III from 5-aminolevulinate: step 2/4.</text>
</comment>
<comment type="subunit">
    <text evidence="1">Monomer.</text>
</comment>
<comment type="miscellaneous">
    <text evidence="1">The porphobilinogen subunits are added to the dipyrromethane group.</text>
</comment>
<comment type="similarity">
    <text evidence="1">Belongs to the HMBS family.</text>
</comment>
<evidence type="ECO:0000255" key="1">
    <source>
        <dbReference type="HAMAP-Rule" id="MF_00260"/>
    </source>
</evidence>
<proteinExistence type="inferred from homology"/>
<gene>
    <name evidence="1" type="primary">hemC</name>
    <name type="ordered locus">Sputw3181_3726</name>
</gene>
<dbReference type="EC" id="2.5.1.61" evidence="1"/>
<dbReference type="EMBL" id="CP000503">
    <property type="protein sequence ID" value="ABM26532.1"/>
    <property type="molecule type" value="Genomic_DNA"/>
</dbReference>
<dbReference type="RefSeq" id="WP_011790963.1">
    <property type="nucleotide sequence ID" value="NC_008750.1"/>
</dbReference>
<dbReference type="SMR" id="A1RPD7"/>
<dbReference type="GeneID" id="67445079"/>
<dbReference type="KEGG" id="shw:Sputw3181_3726"/>
<dbReference type="HOGENOM" id="CLU_019704_0_2_6"/>
<dbReference type="UniPathway" id="UPA00251">
    <property type="reaction ID" value="UER00319"/>
</dbReference>
<dbReference type="Proteomes" id="UP000002597">
    <property type="component" value="Chromosome"/>
</dbReference>
<dbReference type="GO" id="GO:0005737">
    <property type="term" value="C:cytoplasm"/>
    <property type="evidence" value="ECO:0007669"/>
    <property type="project" value="TreeGrafter"/>
</dbReference>
<dbReference type="GO" id="GO:0004418">
    <property type="term" value="F:hydroxymethylbilane synthase activity"/>
    <property type="evidence" value="ECO:0007669"/>
    <property type="project" value="UniProtKB-UniRule"/>
</dbReference>
<dbReference type="GO" id="GO:0006782">
    <property type="term" value="P:protoporphyrinogen IX biosynthetic process"/>
    <property type="evidence" value="ECO:0007669"/>
    <property type="project" value="UniProtKB-UniRule"/>
</dbReference>
<dbReference type="CDD" id="cd13646">
    <property type="entry name" value="PBP2_EcHMBS_like"/>
    <property type="match status" value="1"/>
</dbReference>
<dbReference type="FunFam" id="3.30.160.40:FF:000002">
    <property type="entry name" value="Porphobilinogen deaminase"/>
    <property type="match status" value="1"/>
</dbReference>
<dbReference type="FunFam" id="3.40.190.10:FF:000004">
    <property type="entry name" value="Porphobilinogen deaminase"/>
    <property type="match status" value="1"/>
</dbReference>
<dbReference type="FunFam" id="3.40.190.10:FF:000005">
    <property type="entry name" value="Porphobilinogen deaminase"/>
    <property type="match status" value="1"/>
</dbReference>
<dbReference type="Gene3D" id="3.40.190.10">
    <property type="entry name" value="Periplasmic binding protein-like II"/>
    <property type="match status" value="2"/>
</dbReference>
<dbReference type="Gene3D" id="3.30.160.40">
    <property type="entry name" value="Porphobilinogen deaminase, C-terminal domain"/>
    <property type="match status" value="1"/>
</dbReference>
<dbReference type="HAMAP" id="MF_00260">
    <property type="entry name" value="Porphobil_deam"/>
    <property type="match status" value="1"/>
</dbReference>
<dbReference type="InterPro" id="IPR000860">
    <property type="entry name" value="HemC"/>
</dbReference>
<dbReference type="InterPro" id="IPR022419">
    <property type="entry name" value="Porphobilin_deaminase_cofac_BS"/>
</dbReference>
<dbReference type="InterPro" id="IPR022417">
    <property type="entry name" value="Porphobilin_deaminase_N"/>
</dbReference>
<dbReference type="InterPro" id="IPR022418">
    <property type="entry name" value="Porphobilinogen_deaminase_C"/>
</dbReference>
<dbReference type="InterPro" id="IPR036803">
    <property type="entry name" value="Porphobilinogen_deaminase_C_sf"/>
</dbReference>
<dbReference type="NCBIfam" id="TIGR00212">
    <property type="entry name" value="hemC"/>
    <property type="match status" value="1"/>
</dbReference>
<dbReference type="PANTHER" id="PTHR11557">
    <property type="entry name" value="PORPHOBILINOGEN DEAMINASE"/>
    <property type="match status" value="1"/>
</dbReference>
<dbReference type="PANTHER" id="PTHR11557:SF0">
    <property type="entry name" value="PORPHOBILINOGEN DEAMINASE"/>
    <property type="match status" value="1"/>
</dbReference>
<dbReference type="Pfam" id="PF01379">
    <property type="entry name" value="Porphobil_deam"/>
    <property type="match status" value="1"/>
</dbReference>
<dbReference type="Pfam" id="PF03900">
    <property type="entry name" value="Porphobil_deamC"/>
    <property type="match status" value="1"/>
</dbReference>
<dbReference type="PIRSF" id="PIRSF001438">
    <property type="entry name" value="4pyrrol_synth_OHMeBilane_synth"/>
    <property type="match status" value="1"/>
</dbReference>
<dbReference type="PRINTS" id="PR00151">
    <property type="entry name" value="PORPHBDMNASE"/>
</dbReference>
<dbReference type="SUPFAM" id="SSF53850">
    <property type="entry name" value="Periplasmic binding protein-like II"/>
    <property type="match status" value="1"/>
</dbReference>
<dbReference type="SUPFAM" id="SSF54782">
    <property type="entry name" value="Porphobilinogen deaminase (hydroxymethylbilane synthase), C-terminal domain"/>
    <property type="match status" value="1"/>
</dbReference>
<dbReference type="PROSITE" id="PS00533">
    <property type="entry name" value="PORPHOBILINOGEN_DEAM"/>
    <property type="match status" value="1"/>
</dbReference>
<name>HEM3_SHESW</name>
<protein>
    <recommendedName>
        <fullName evidence="1">Porphobilinogen deaminase</fullName>
        <shortName evidence="1">PBG</shortName>
        <ecNumber evidence="1">2.5.1.61</ecNumber>
    </recommendedName>
    <alternativeName>
        <fullName evidence="1">Hydroxymethylbilane synthase</fullName>
        <shortName evidence="1">HMBS</shortName>
    </alternativeName>
    <alternativeName>
        <fullName evidence="1">Pre-uroporphyrinogen synthase</fullName>
    </alternativeName>
</protein>
<keyword id="KW-0627">Porphyrin biosynthesis</keyword>
<keyword id="KW-0808">Transferase</keyword>
<feature type="chain" id="PRO_0000304275" description="Porphobilinogen deaminase">
    <location>
        <begin position="1"/>
        <end position="310"/>
    </location>
</feature>
<feature type="modified residue" description="S-(dipyrrolylmethanemethyl)cysteine" evidence="1">
    <location>
        <position position="242"/>
    </location>
</feature>